<dbReference type="EC" id="2.4.99.17" evidence="1"/>
<dbReference type="EMBL" id="CR628336">
    <property type="protein sequence ID" value="CAH13137.1"/>
    <property type="molecule type" value="Genomic_DNA"/>
</dbReference>
<dbReference type="RefSeq" id="WP_011214252.1">
    <property type="nucleotide sequence ID" value="NC_006368.1"/>
</dbReference>
<dbReference type="SMR" id="Q5X3P9"/>
<dbReference type="KEGG" id="lpp:lpp1985"/>
<dbReference type="LegioList" id="lpp1985"/>
<dbReference type="HOGENOM" id="CLU_039110_1_0_6"/>
<dbReference type="UniPathway" id="UPA00392"/>
<dbReference type="GO" id="GO:0005737">
    <property type="term" value="C:cytoplasm"/>
    <property type="evidence" value="ECO:0007669"/>
    <property type="project" value="UniProtKB-SubCell"/>
</dbReference>
<dbReference type="GO" id="GO:0051075">
    <property type="term" value="F:S-adenosylmethionine:tRNA ribosyltransferase-isomerase activity"/>
    <property type="evidence" value="ECO:0007669"/>
    <property type="project" value="UniProtKB-EC"/>
</dbReference>
<dbReference type="GO" id="GO:0008616">
    <property type="term" value="P:queuosine biosynthetic process"/>
    <property type="evidence" value="ECO:0007669"/>
    <property type="project" value="UniProtKB-UniRule"/>
</dbReference>
<dbReference type="GO" id="GO:0002099">
    <property type="term" value="P:tRNA wobble guanine modification"/>
    <property type="evidence" value="ECO:0007669"/>
    <property type="project" value="TreeGrafter"/>
</dbReference>
<dbReference type="FunFam" id="3.40.1780.10:FF:000001">
    <property type="entry name" value="S-adenosylmethionine:tRNA ribosyltransferase-isomerase"/>
    <property type="match status" value="1"/>
</dbReference>
<dbReference type="Gene3D" id="2.40.10.240">
    <property type="entry name" value="QueA-like"/>
    <property type="match status" value="1"/>
</dbReference>
<dbReference type="Gene3D" id="3.40.1780.10">
    <property type="entry name" value="QueA-like"/>
    <property type="match status" value="1"/>
</dbReference>
<dbReference type="HAMAP" id="MF_00113">
    <property type="entry name" value="QueA"/>
    <property type="match status" value="1"/>
</dbReference>
<dbReference type="InterPro" id="IPR003699">
    <property type="entry name" value="QueA"/>
</dbReference>
<dbReference type="InterPro" id="IPR042118">
    <property type="entry name" value="QueA_dom1"/>
</dbReference>
<dbReference type="InterPro" id="IPR042119">
    <property type="entry name" value="QueA_dom2"/>
</dbReference>
<dbReference type="InterPro" id="IPR036100">
    <property type="entry name" value="QueA_sf"/>
</dbReference>
<dbReference type="NCBIfam" id="NF001140">
    <property type="entry name" value="PRK00147.1"/>
    <property type="match status" value="1"/>
</dbReference>
<dbReference type="NCBIfam" id="TIGR00113">
    <property type="entry name" value="queA"/>
    <property type="match status" value="1"/>
</dbReference>
<dbReference type="PANTHER" id="PTHR30307">
    <property type="entry name" value="S-ADENOSYLMETHIONINE:TRNA RIBOSYLTRANSFERASE-ISOMERASE"/>
    <property type="match status" value="1"/>
</dbReference>
<dbReference type="PANTHER" id="PTHR30307:SF0">
    <property type="entry name" value="S-ADENOSYLMETHIONINE:TRNA RIBOSYLTRANSFERASE-ISOMERASE"/>
    <property type="match status" value="1"/>
</dbReference>
<dbReference type="Pfam" id="PF02547">
    <property type="entry name" value="Queuosine_synth"/>
    <property type="match status" value="1"/>
</dbReference>
<dbReference type="SUPFAM" id="SSF111337">
    <property type="entry name" value="QueA-like"/>
    <property type="match status" value="1"/>
</dbReference>
<keyword id="KW-0963">Cytoplasm</keyword>
<keyword id="KW-0671">Queuosine biosynthesis</keyword>
<keyword id="KW-0949">S-adenosyl-L-methionine</keyword>
<keyword id="KW-0808">Transferase</keyword>
<protein>
    <recommendedName>
        <fullName evidence="1">S-adenosylmethionine:tRNA ribosyltransferase-isomerase</fullName>
        <ecNumber evidence="1">2.4.99.17</ecNumber>
    </recommendedName>
    <alternativeName>
        <fullName evidence="1">Queuosine biosynthesis protein QueA</fullName>
    </alternativeName>
</protein>
<gene>
    <name evidence="1" type="primary">queA</name>
    <name type="ordered locus">lpp1985</name>
</gene>
<feature type="chain" id="PRO_0000231346" description="S-adenosylmethionine:tRNA ribosyltransferase-isomerase">
    <location>
        <begin position="1"/>
        <end position="337"/>
    </location>
</feature>
<proteinExistence type="inferred from homology"/>
<name>QUEA_LEGPA</name>
<reference key="1">
    <citation type="journal article" date="2004" name="Nat. Genet.">
        <title>Evidence in the Legionella pneumophila genome for exploitation of host cell functions and high genome plasticity.</title>
        <authorList>
            <person name="Cazalet C."/>
            <person name="Rusniok C."/>
            <person name="Brueggemann H."/>
            <person name="Zidane N."/>
            <person name="Magnier A."/>
            <person name="Ma L."/>
            <person name="Tichit M."/>
            <person name="Jarraud S."/>
            <person name="Bouchier C."/>
            <person name="Vandenesch F."/>
            <person name="Kunst F."/>
            <person name="Etienne J."/>
            <person name="Glaser P."/>
            <person name="Buchrieser C."/>
        </authorList>
    </citation>
    <scope>NUCLEOTIDE SEQUENCE [LARGE SCALE GENOMIC DNA]</scope>
    <source>
        <strain>Paris</strain>
    </source>
</reference>
<organism>
    <name type="scientific">Legionella pneumophila (strain Paris)</name>
    <dbReference type="NCBI Taxonomy" id="297246"/>
    <lineage>
        <taxon>Bacteria</taxon>
        <taxon>Pseudomonadati</taxon>
        <taxon>Pseudomonadota</taxon>
        <taxon>Gammaproteobacteria</taxon>
        <taxon>Legionellales</taxon>
        <taxon>Legionellaceae</taxon>
        <taxon>Legionella</taxon>
    </lineage>
</organism>
<accession>Q5X3P9</accession>
<sequence>MNKQDFYFDLPSELIAQYPLANRSDSRLLIYNRQTEEYGHYQFREIADFLQPGDLLVMNDSKVIPARLYGHKATGGKVELLVERITGDFTFLAHIKASKSLKSNDLIYLDAGKRLEVLERQDDLFLCKASENILDLLNDLGHIPLPPYIAREDESLDKERYQTVYAKCAGSVAAPTAGLHFDDAVLSSIRARGVNIAYVTLHVGAGTFRPVRCERIQDHKMHSEWFTVSPDLCAAVKAAKSMGNRVIAVGTTALRSLESAAMGGELIPCSRDTDIFIYPGYQFKVCDGLITNFHLPESTLVMLVSAFIGHQECMALYQEAIDKRYRFFSYGDASLLL</sequence>
<evidence type="ECO:0000255" key="1">
    <source>
        <dbReference type="HAMAP-Rule" id="MF_00113"/>
    </source>
</evidence>
<comment type="function">
    <text evidence="1">Transfers and isomerizes the ribose moiety from AdoMet to the 7-aminomethyl group of 7-deazaguanine (preQ1-tRNA) to give epoxyqueuosine (oQ-tRNA).</text>
</comment>
<comment type="catalytic activity">
    <reaction evidence="1">
        <text>7-aminomethyl-7-carbaguanosine(34) in tRNA + S-adenosyl-L-methionine = epoxyqueuosine(34) in tRNA + adenine + L-methionine + 2 H(+)</text>
        <dbReference type="Rhea" id="RHEA:32155"/>
        <dbReference type="Rhea" id="RHEA-COMP:10342"/>
        <dbReference type="Rhea" id="RHEA-COMP:18582"/>
        <dbReference type="ChEBI" id="CHEBI:15378"/>
        <dbReference type="ChEBI" id="CHEBI:16708"/>
        <dbReference type="ChEBI" id="CHEBI:57844"/>
        <dbReference type="ChEBI" id="CHEBI:59789"/>
        <dbReference type="ChEBI" id="CHEBI:82833"/>
        <dbReference type="ChEBI" id="CHEBI:194443"/>
        <dbReference type="EC" id="2.4.99.17"/>
    </reaction>
</comment>
<comment type="pathway">
    <text evidence="1">tRNA modification; tRNA-queuosine biosynthesis.</text>
</comment>
<comment type="subunit">
    <text evidence="1">Monomer.</text>
</comment>
<comment type="subcellular location">
    <subcellularLocation>
        <location evidence="1">Cytoplasm</location>
    </subcellularLocation>
</comment>
<comment type="similarity">
    <text evidence="1">Belongs to the QueA family.</text>
</comment>